<feature type="peptide" id="PRO_0000420784" description="Pyrokinin-2" evidence="3">
    <location>
        <begin position="1"/>
        <end position="8"/>
    </location>
</feature>
<feature type="modified residue" description="Leucine amide" evidence="3">
    <location>
        <position position="8"/>
    </location>
</feature>
<keyword id="KW-0027">Amidation</keyword>
<keyword id="KW-0903">Direct protein sequencing</keyword>
<keyword id="KW-0527">Neuropeptide</keyword>
<keyword id="KW-0964">Secreted</keyword>
<reference evidence="5" key="1">
    <citation type="journal article" date="2012" name="Syst. Biol.">
        <title>Peptidomics-based phylogeny and biogeography of Mantophasmatodea (Hexapoda).</title>
        <authorList>
            <person name="Predel R."/>
            <person name="Neupert S."/>
            <person name="Huetteroth W."/>
            <person name="Kahnt J."/>
            <person name="Waidelich D."/>
            <person name="Roth S."/>
        </authorList>
    </citation>
    <scope>PROTEIN SEQUENCE</scope>
    <scope>AMIDATION AT LEU-8</scope>
    <source>
        <tissue evidence="3">Corpora cardiaca</tissue>
    </source>
</reference>
<accession>B0M3D9</accession>
<proteinExistence type="evidence at protein level"/>
<sequence>SPPFAPRL</sequence>
<protein>
    <recommendedName>
        <fullName evidence="4">Pyrokinin-2</fullName>
        <shortName evidence="4">PK-2</shortName>
    </recommendedName>
    <alternativeName>
        <fullName evidence="1">FXPRL-amide</fullName>
    </alternativeName>
</protein>
<name>PPK2_MANKU</name>
<dbReference type="GO" id="GO:0005576">
    <property type="term" value="C:extracellular region"/>
    <property type="evidence" value="ECO:0007669"/>
    <property type="project" value="UniProtKB-SubCell"/>
</dbReference>
<dbReference type="GO" id="GO:0007218">
    <property type="term" value="P:neuropeptide signaling pathway"/>
    <property type="evidence" value="ECO:0007669"/>
    <property type="project" value="UniProtKB-KW"/>
</dbReference>
<evidence type="ECO:0000250" key="1">
    <source>
        <dbReference type="UniProtKB" id="P82619"/>
    </source>
</evidence>
<evidence type="ECO:0000255" key="2"/>
<evidence type="ECO:0000269" key="3">
    <source>
    </source>
</evidence>
<evidence type="ECO:0000303" key="4">
    <source>
    </source>
</evidence>
<evidence type="ECO:0000305" key="5"/>
<evidence type="ECO:0000305" key="6">
    <source>
    </source>
</evidence>
<organism>
    <name type="scientific">Mantophasma kudubergense</name>
    <name type="common">Gladiator</name>
    <name type="synonym">Heel-walker</name>
    <dbReference type="NCBI Taxonomy" id="1037657"/>
    <lineage>
        <taxon>Eukaryota</taxon>
        <taxon>Metazoa</taxon>
        <taxon>Ecdysozoa</taxon>
        <taxon>Arthropoda</taxon>
        <taxon>Hexapoda</taxon>
        <taxon>Insecta</taxon>
        <taxon>Pterygota</taxon>
        <taxon>Neoptera</taxon>
        <taxon>Polyneoptera</taxon>
        <taxon>Mantophasmatodea</taxon>
        <taxon>Mantophasmatidae</taxon>
        <taxon>Mantophasma</taxon>
    </lineage>
</organism>
<comment type="function">
    <text evidence="1">Myoactive.</text>
</comment>
<comment type="subcellular location">
    <subcellularLocation>
        <location evidence="6">Secreted</location>
    </subcellularLocation>
</comment>
<comment type="similarity">
    <text evidence="2">Belongs to the pyrokinin family.</text>
</comment>